<sequence length="712" mass="79747">MEIRMSDSSSKPVLVTCGLPYANGKAHIGHLRTYVPADIFARSLRKEGREVTFVCGSDTHGTPIVVNAEELGITPKELVEIYHKHFDETFKQLGVYFDAFGTTDDPENHNRTLDIVNRLIEKDYVYPKIIEIAYCPACNRFLPDRYVEGACPHCGETARGDECDQGCGKHLEPGELQNPVCTICGGPAEYRHQEHFFFKLSEFGDYLMDYLSNDLGGTTNARNYALGWVKQGLTDWCITRNLEWGVRFPGHEDLVVYVWVDAPIGYIAFTEEWAAQAGDSWEKFWKGEGEIVHFIGGDITYHHCIFWPAMLNGADYSVPTAVVASGMVKIEDKKFSKTRGYVVWVGEDYLDHGFHPDLLRYYLASYTSHTKELNFSWRVLQEKINAELVAVLGNFLYRTMLFAFKNYGEVPEGKLEPEVSAEIEEALKEVKEAMAEYEFKKAVDSAMALASFGNTYFQSHEPWKLIKEDRSACGQVIYNCLHLAKALSLIFEPVLPQTMETAWKGLGQESDIHASRYEEALVPLKAGTKLAKPELLFTKLEDDRIGEMEEIANQRVKAANAKKSAAKGGEKEPSKSEGMGPSEEAKVAEKAAKAEEKVPIETLPQIEYEDFAKLDIRVGKVLFVEPVKKSRKLLRVEVDIGEEKPRQLVAGMASYYTSEELVGKYVVVLANLKPAKLCGVESNGMMLAADDGGAIVAALMPDKEIKPGSRIR</sequence>
<organism>
    <name type="scientific">Methanosarcina acetivorans (strain ATCC 35395 / DSM 2834 / JCM 12185 / C2A)</name>
    <dbReference type="NCBI Taxonomy" id="188937"/>
    <lineage>
        <taxon>Archaea</taxon>
        <taxon>Methanobacteriati</taxon>
        <taxon>Methanobacteriota</taxon>
        <taxon>Stenosarchaea group</taxon>
        <taxon>Methanomicrobia</taxon>
        <taxon>Methanosarcinales</taxon>
        <taxon>Methanosarcinaceae</taxon>
        <taxon>Methanosarcina</taxon>
    </lineage>
</organism>
<dbReference type="EC" id="6.1.1.10" evidence="1"/>
<dbReference type="EMBL" id="AE010299">
    <property type="protein sequence ID" value="AAM07394.1"/>
    <property type="molecule type" value="Genomic_DNA"/>
</dbReference>
<dbReference type="SMR" id="Q8TIU5"/>
<dbReference type="FunCoup" id="Q8TIU5">
    <property type="interactions" value="246"/>
</dbReference>
<dbReference type="STRING" id="188937.MA_4046"/>
<dbReference type="EnsemblBacteria" id="AAM07394">
    <property type="protein sequence ID" value="AAM07394"/>
    <property type="gene ID" value="MA_4046"/>
</dbReference>
<dbReference type="KEGG" id="mac:MA_4046"/>
<dbReference type="HOGENOM" id="CLU_009710_7_0_2"/>
<dbReference type="InParanoid" id="Q8TIU5"/>
<dbReference type="OrthoDB" id="371856at2157"/>
<dbReference type="PhylomeDB" id="Q8TIU5"/>
<dbReference type="Proteomes" id="UP000002487">
    <property type="component" value="Chromosome"/>
</dbReference>
<dbReference type="GO" id="GO:0017101">
    <property type="term" value="C:aminoacyl-tRNA synthetase multienzyme complex"/>
    <property type="evidence" value="ECO:0000318"/>
    <property type="project" value="GO_Central"/>
</dbReference>
<dbReference type="GO" id="GO:0005829">
    <property type="term" value="C:cytosol"/>
    <property type="evidence" value="ECO:0000318"/>
    <property type="project" value="GO_Central"/>
</dbReference>
<dbReference type="GO" id="GO:0005524">
    <property type="term" value="F:ATP binding"/>
    <property type="evidence" value="ECO:0007669"/>
    <property type="project" value="UniProtKB-UniRule"/>
</dbReference>
<dbReference type="GO" id="GO:0046872">
    <property type="term" value="F:metal ion binding"/>
    <property type="evidence" value="ECO:0007669"/>
    <property type="project" value="UniProtKB-KW"/>
</dbReference>
<dbReference type="GO" id="GO:0004825">
    <property type="term" value="F:methionine-tRNA ligase activity"/>
    <property type="evidence" value="ECO:0000318"/>
    <property type="project" value="GO_Central"/>
</dbReference>
<dbReference type="GO" id="GO:0000049">
    <property type="term" value="F:tRNA binding"/>
    <property type="evidence" value="ECO:0007669"/>
    <property type="project" value="UniProtKB-KW"/>
</dbReference>
<dbReference type="GO" id="GO:0006431">
    <property type="term" value="P:methionyl-tRNA aminoacylation"/>
    <property type="evidence" value="ECO:0000318"/>
    <property type="project" value="GO_Central"/>
</dbReference>
<dbReference type="CDD" id="cd07957">
    <property type="entry name" value="Anticodon_Ia_Met"/>
    <property type="match status" value="1"/>
</dbReference>
<dbReference type="CDD" id="cd00814">
    <property type="entry name" value="MetRS_core"/>
    <property type="match status" value="1"/>
</dbReference>
<dbReference type="CDD" id="cd02800">
    <property type="entry name" value="tRNA_bind_EcMetRS_like"/>
    <property type="match status" value="1"/>
</dbReference>
<dbReference type="FunFam" id="2.20.28.20:FF:000001">
    <property type="entry name" value="Methionine--tRNA ligase"/>
    <property type="match status" value="1"/>
</dbReference>
<dbReference type="FunFam" id="2.40.50.140:FF:000042">
    <property type="entry name" value="Methionine--tRNA ligase"/>
    <property type="match status" value="1"/>
</dbReference>
<dbReference type="Gene3D" id="3.40.50.620">
    <property type="entry name" value="HUPs"/>
    <property type="match status" value="1"/>
</dbReference>
<dbReference type="Gene3D" id="1.10.730.10">
    <property type="entry name" value="Isoleucyl-tRNA Synthetase, Domain 1"/>
    <property type="match status" value="1"/>
</dbReference>
<dbReference type="Gene3D" id="2.20.28.20">
    <property type="entry name" value="Methionyl-tRNA synthetase, Zn-domain"/>
    <property type="match status" value="1"/>
</dbReference>
<dbReference type="Gene3D" id="2.40.50.140">
    <property type="entry name" value="Nucleic acid-binding proteins"/>
    <property type="match status" value="1"/>
</dbReference>
<dbReference type="HAMAP" id="MF_00098">
    <property type="entry name" value="Met_tRNA_synth_type1"/>
    <property type="match status" value="1"/>
</dbReference>
<dbReference type="InterPro" id="IPR041872">
    <property type="entry name" value="Anticodon_Met"/>
</dbReference>
<dbReference type="InterPro" id="IPR004495">
    <property type="entry name" value="Met-tRNA-synth_bsu_C"/>
</dbReference>
<dbReference type="InterPro" id="IPR023458">
    <property type="entry name" value="Met-tRNA_ligase_1"/>
</dbReference>
<dbReference type="InterPro" id="IPR014758">
    <property type="entry name" value="Met-tRNA_synth"/>
</dbReference>
<dbReference type="InterPro" id="IPR015413">
    <property type="entry name" value="Methionyl/Leucyl_tRNA_Synth"/>
</dbReference>
<dbReference type="InterPro" id="IPR033911">
    <property type="entry name" value="MetRS_core"/>
</dbReference>
<dbReference type="InterPro" id="IPR029038">
    <property type="entry name" value="MetRS_Zn"/>
</dbReference>
<dbReference type="InterPro" id="IPR012340">
    <property type="entry name" value="NA-bd_OB-fold"/>
</dbReference>
<dbReference type="InterPro" id="IPR014729">
    <property type="entry name" value="Rossmann-like_a/b/a_fold"/>
</dbReference>
<dbReference type="InterPro" id="IPR002547">
    <property type="entry name" value="tRNA-bd_dom"/>
</dbReference>
<dbReference type="InterPro" id="IPR009080">
    <property type="entry name" value="tRNAsynth_Ia_anticodon-bd"/>
</dbReference>
<dbReference type="NCBIfam" id="TIGR00398">
    <property type="entry name" value="metG"/>
    <property type="match status" value="1"/>
</dbReference>
<dbReference type="NCBIfam" id="TIGR00399">
    <property type="entry name" value="metG_C_term"/>
    <property type="match status" value="1"/>
</dbReference>
<dbReference type="NCBIfam" id="NF001100">
    <property type="entry name" value="PRK00133.1"/>
    <property type="match status" value="1"/>
</dbReference>
<dbReference type="PANTHER" id="PTHR45765">
    <property type="entry name" value="METHIONINE--TRNA LIGASE"/>
    <property type="match status" value="1"/>
</dbReference>
<dbReference type="PANTHER" id="PTHR45765:SF1">
    <property type="entry name" value="METHIONINE--TRNA LIGASE, CYTOPLASMIC"/>
    <property type="match status" value="1"/>
</dbReference>
<dbReference type="Pfam" id="PF19303">
    <property type="entry name" value="Anticodon_3"/>
    <property type="match status" value="1"/>
</dbReference>
<dbReference type="Pfam" id="PF09334">
    <property type="entry name" value="tRNA-synt_1g"/>
    <property type="match status" value="1"/>
</dbReference>
<dbReference type="Pfam" id="PF01588">
    <property type="entry name" value="tRNA_bind"/>
    <property type="match status" value="1"/>
</dbReference>
<dbReference type="PRINTS" id="PR01041">
    <property type="entry name" value="TRNASYNTHMET"/>
</dbReference>
<dbReference type="SUPFAM" id="SSF47323">
    <property type="entry name" value="Anticodon-binding domain of a subclass of class I aminoacyl-tRNA synthetases"/>
    <property type="match status" value="1"/>
</dbReference>
<dbReference type="SUPFAM" id="SSF57770">
    <property type="entry name" value="Methionyl-tRNA synthetase (MetRS), Zn-domain"/>
    <property type="match status" value="1"/>
</dbReference>
<dbReference type="SUPFAM" id="SSF50249">
    <property type="entry name" value="Nucleic acid-binding proteins"/>
    <property type="match status" value="1"/>
</dbReference>
<dbReference type="SUPFAM" id="SSF52374">
    <property type="entry name" value="Nucleotidylyl transferase"/>
    <property type="match status" value="1"/>
</dbReference>
<dbReference type="PROSITE" id="PS50886">
    <property type="entry name" value="TRBD"/>
    <property type="match status" value="1"/>
</dbReference>
<reference key="1">
    <citation type="journal article" date="2002" name="Genome Res.">
        <title>The genome of Methanosarcina acetivorans reveals extensive metabolic and physiological diversity.</title>
        <authorList>
            <person name="Galagan J.E."/>
            <person name="Nusbaum C."/>
            <person name="Roy A."/>
            <person name="Endrizzi M.G."/>
            <person name="Macdonald P."/>
            <person name="FitzHugh W."/>
            <person name="Calvo S."/>
            <person name="Engels R."/>
            <person name="Smirnov S."/>
            <person name="Atnoor D."/>
            <person name="Brown A."/>
            <person name="Allen N."/>
            <person name="Naylor J."/>
            <person name="Stange-Thomann N."/>
            <person name="DeArellano K."/>
            <person name="Johnson R."/>
            <person name="Linton L."/>
            <person name="McEwan P."/>
            <person name="McKernan K."/>
            <person name="Talamas J."/>
            <person name="Tirrell A."/>
            <person name="Ye W."/>
            <person name="Zimmer A."/>
            <person name="Barber R.D."/>
            <person name="Cann I."/>
            <person name="Graham D.E."/>
            <person name="Grahame D.A."/>
            <person name="Guss A.M."/>
            <person name="Hedderich R."/>
            <person name="Ingram-Smith C."/>
            <person name="Kuettner H.C."/>
            <person name="Krzycki J.A."/>
            <person name="Leigh J.A."/>
            <person name="Li W."/>
            <person name="Liu J."/>
            <person name="Mukhopadhyay B."/>
            <person name="Reeve J.N."/>
            <person name="Smith K."/>
            <person name="Springer T.A."/>
            <person name="Umayam L.A."/>
            <person name="White O."/>
            <person name="White R.H."/>
            <person name="de Macario E.C."/>
            <person name="Ferry J.G."/>
            <person name="Jarrell K.F."/>
            <person name="Jing H."/>
            <person name="Macario A.J.L."/>
            <person name="Paulsen I.T."/>
            <person name="Pritchett M."/>
            <person name="Sowers K.R."/>
            <person name="Swanson R.V."/>
            <person name="Zinder S.H."/>
            <person name="Lander E."/>
            <person name="Metcalf W.W."/>
            <person name="Birren B."/>
        </authorList>
    </citation>
    <scope>NUCLEOTIDE SEQUENCE [LARGE SCALE GENOMIC DNA]</scope>
    <source>
        <strain>ATCC 35395 / DSM 2834 / JCM 12185 / C2A</strain>
    </source>
</reference>
<protein>
    <recommendedName>
        <fullName evidence="1">Methionine--tRNA ligase</fullName>
        <ecNumber evidence="1">6.1.1.10</ecNumber>
    </recommendedName>
    <alternativeName>
        <fullName evidence="1">Methionyl-tRNA synthetase</fullName>
        <shortName evidence="1">MetRS</shortName>
    </alternativeName>
</protein>
<keyword id="KW-0030">Aminoacyl-tRNA synthetase</keyword>
<keyword id="KW-0067">ATP-binding</keyword>
<keyword id="KW-0963">Cytoplasm</keyword>
<keyword id="KW-0436">Ligase</keyword>
<keyword id="KW-0479">Metal-binding</keyword>
<keyword id="KW-0547">Nucleotide-binding</keyword>
<keyword id="KW-0648">Protein biosynthesis</keyword>
<keyword id="KW-1185">Reference proteome</keyword>
<keyword id="KW-0694">RNA-binding</keyword>
<keyword id="KW-0820">tRNA-binding</keyword>
<keyword id="KW-0862">Zinc</keyword>
<gene>
    <name evidence="1" type="primary">metG</name>
    <name type="ordered locus">MA_4046</name>
</gene>
<comment type="function">
    <text evidence="1">Is required not only for elongation of protein synthesis but also for the initiation of all mRNA translation through initiator tRNA(fMet) aminoacylation.</text>
</comment>
<comment type="catalytic activity">
    <reaction evidence="1">
        <text>tRNA(Met) + L-methionine + ATP = L-methionyl-tRNA(Met) + AMP + diphosphate</text>
        <dbReference type="Rhea" id="RHEA:13481"/>
        <dbReference type="Rhea" id="RHEA-COMP:9667"/>
        <dbReference type="Rhea" id="RHEA-COMP:9698"/>
        <dbReference type="ChEBI" id="CHEBI:30616"/>
        <dbReference type="ChEBI" id="CHEBI:33019"/>
        <dbReference type="ChEBI" id="CHEBI:57844"/>
        <dbReference type="ChEBI" id="CHEBI:78442"/>
        <dbReference type="ChEBI" id="CHEBI:78530"/>
        <dbReference type="ChEBI" id="CHEBI:456215"/>
        <dbReference type="EC" id="6.1.1.10"/>
    </reaction>
</comment>
<comment type="cofactor">
    <cofactor evidence="1">
        <name>Zn(2+)</name>
        <dbReference type="ChEBI" id="CHEBI:29105"/>
    </cofactor>
    <text evidence="1">Binds 1 zinc ion per subunit.</text>
</comment>
<comment type="subunit">
    <text evidence="1">Homodimer.</text>
</comment>
<comment type="subcellular location">
    <subcellularLocation>
        <location evidence="1">Cytoplasm</location>
    </subcellularLocation>
</comment>
<comment type="similarity">
    <text evidence="1">Belongs to the class-I aminoacyl-tRNA synthetase family. MetG type 1 subfamily.</text>
</comment>
<name>SYM_METAC</name>
<proteinExistence type="inferred from homology"/>
<evidence type="ECO:0000255" key="1">
    <source>
        <dbReference type="HAMAP-Rule" id="MF_00098"/>
    </source>
</evidence>
<evidence type="ECO:0000256" key="2">
    <source>
        <dbReference type="SAM" id="MobiDB-lite"/>
    </source>
</evidence>
<feature type="chain" id="PRO_0000139186" description="Methionine--tRNA ligase">
    <location>
        <begin position="1"/>
        <end position="712"/>
    </location>
</feature>
<feature type="domain" description="tRNA-binding" evidence="1">
    <location>
        <begin position="610"/>
        <end position="712"/>
    </location>
</feature>
<feature type="region of interest" description="Disordered" evidence="2">
    <location>
        <begin position="559"/>
        <end position="585"/>
    </location>
</feature>
<feature type="short sequence motif" description="'HIGH' region">
    <location>
        <begin position="20"/>
        <end position="30"/>
    </location>
</feature>
<feature type="short sequence motif" description="'KMSKS' region">
    <location>
        <begin position="334"/>
        <end position="338"/>
    </location>
</feature>
<feature type="binding site" evidence="1">
    <location>
        <position position="151"/>
    </location>
    <ligand>
        <name>Zn(2+)</name>
        <dbReference type="ChEBI" id="CHEBI:29105"/>
    </ligand>
</feature>
<feature type="binding site" evidence="1">
    <location>
        <position position="154"/>
    </location>
    <ligand>
        <name>Zn(2+)</name>
        <dbReference type="ChEBI" id="CHEBI:29105"/>
    </ligand>
</feature>
<feature type="binding site" evidence="1">
    <location>
        <position position="163"/>
    </location>
    <ligand>
        <name>Zn(2+)</name>
        <dbReference type="ChEBI" id="CHEBI:29105"/>
    </ligand>
</feature>
<feature type="binding site" evidence="1">
    <location>
        <position position="167"/>
    </location>
    <ligand>
        <name>Zn(2+)</name>
        <dbReference type="ChEBI" id="CHEBI:29105"/>
    </ligand>
</feature>
<feature type="binding site" evidence="1">
    <location>
        <position position="337"/>
    </location>
    <ligand>
        <name>ATP</name>
        <dbReference type="ChEBI" id="CHEBI:30616"/>
    </ligand>
</feature>
<accession>Q8TIU5</accession>